<dbReference type="EC" id="3.2.1.11"/>
<dbReference type="EMBL" id="D00834">
    <property type="protein sequence ID" value="BAA00708.1"/>
    <property type="molecule type" value="Genomic_DNA"/>
</dbReference>
<dbReference type="SMR" id="P39652"/>
<dbReference type="CAZy" id="GH49">
    <property type="family name" value="Glycoside Hydrolase Family 49"/>
</dbReference>
<dbReference type="GO" id="GO:0005576">
    <property type="term" value="C:extracellular region"/>
    <property type="evidence" value="ECO:0007669"/>
    <property type="project" value="UniProtKB-SubCell"/>
</dbReference>
<dbReference type="GO" id="GO:0033904">
    <property type="term" value="F:dextranase activity"/>
    <property type="evidence" value="ECO:0007669"/>
    <property type="project" value="UniProtKB-EC"/>
</dbReference>
<dbReference type="Gene3D" id="2.60.350.10">
    <property type="entry name" value="Dextranase, N-terminal"/>
    <property type="match status" value="1"/>
</dbReference>
<dbReference type="Gene3D" id="2.160.20.10">
    <property type="entry name" value="Single-stranded right-handed beta-helix, Pectin lyase-like"/>
    <property type="match status" value="1"/>
</dbReference>
<dbReference type="InterPro" id="IPR041402">
    <property type="entry name" value="B_solenoid_dext"/>
</dbReference>
<dbReference type="InterPro" id="IPR035953">
    <property type="entry name" value="Dextranase_N-ter"/>
</dbReference>
<dbReference type="InterPro" id="IPR005192">
    <property type="entry name" value="Glyco_hydro_49_C"/>
</dbReference>
<dbReference type="InterPro" id="IPR023226">
    <property type="entry name" value="Glyco_hydro_49_N_dom"/>
</dbReference>
<dbReference type="InterPro" id="IPR041274">
    <property type="entry name" value="IPU_b_solenoid"/>
</dbReference>
<dbReference type="InterPro" id="IPR012334">
    <property type="entry name" value="Pectin_lyas_fold"/>
</dbReference>
<dbReference type="InterPro" id="IPR011050">
    <property type="entry name" value="Pectin_lyase_fold/virulence"/>
</dbReference>
<dbReference type="Pfam" id="PF18841">
    <property type="entry name" value="B_solenoid_dext"/>
    <property type="match status" value="1"/>
</dbReference>
<dbReference type="Pfam" id="PF03718">
    <property type="entry name" value="Glyco_hydro_49"/>
    <property type="match status" value="1"/>
</dbReference>
<dbReference type="Pfam" id="PF17433">
    <property type="entry name" value="Glyco_hydro_49N"/>
    <property type="match status" value="1"/>
</dbReference>
<dbReference type="Pfam" id="PF18783">
    <property type="entry name" value="IPU_b_solenoid"/>
    <property type="match status" value="1"/>
</dbReference>
<dbReference type="SUPFAM" id="SSF101596">
    <property type="entry name" value="Dextranase, N-terminal domain"/>
    <property type="match status" value="1"/>
</dbReference>
<dbReference type="SUPFAM" id="SSF51126">
    <property type="entry name" value="Pectin lyase-like"/>
    <property type="match status" value="1"/>
</dbReference>
<name>DEXT_ARTSD</name>
<proteinExistence type="evidence at protein level"/>
<sequence length="640" mass="71289">MPGTGLGRLAKRMTAAAAVFFISTSAVLPAQAATAPAAAPPGVPAALKAERAITTVDNGNLHTWWHDNGVFSPATPTQSSEVRRSSFYDVQVAQANQPQKLYDAFSYMSIPRSGKGKIGYTEEDGAEFSSDARLTMSWSSFEYAKDVWVEVSLRTGQTISSADQVQIRPSSYNFEKQLVDADTVRIKVPYSDAGYRFSVEFEPQLYTAYNDMSGDSGKLTTEAAGNRPIHTEPRNSMMVFAEPKLRGEQKERLVPTEESGSIHYPEPGEVRNLNSVSEEIIYFRPGTYSMGPDYHAVLPANVKWVYLAPGAYVKGAFRFLHDTQSQYKVTGYGVLSGEQYVYEADTNNSYHHLSGASNCHSSCVKMLQFASADAEQKLDLQGVTVAEPPYHSFVVYGNEQTFHMNVENYKQVGSWYWQTDGIELYKGSTMKNTFFNANDDVLKMYHSDVTIDNTVIWKNENGPVIQWGWTPRNIDNVNVANTTVIHNRMYWKDVKYNTCIFNSSSHWEDMGSTTKADPNTTVKNMRFENTAVEGMTNCAIRVYALSDTENIHIKNFNIGAWNGLEWTSQVSHLKRYTNSAGEKVTIGNEVPDGNGLALENYSVGGQVIEKTGGNSSDYQLGRLGFDGENWENWNAWKSAP</sequence>
<feature type="signal peptide" evidence="1">
    <location>
        <begin position="1"/>
        <end position="32"/>
    </location>
</feature>
<feature type="propeptide" id="PRO_0000012211" evidence="3">
    <location>
        <begin position="33"/>
        <end position="49"/>
    </location>
</feature>
<feature type="chain" id="PRO_0000012212" description="Dextranase">
    <location>
        <begin position="50"/>
        <end position="640"/>
    </location>
</feature>
<feature type="region of interest" description="Disordered" evidence="2">
    <location>
        <begin position="248"/>
        <end position="269"/>
    </location>
</feature>
<evidence type="ECO:0000255" key="1"/>
<evidence type="ECO:0000256" key="2">
    <source>
        <dbReference type="SAM" id="MobiDB-lite"/>
    </source>
</evidence>
<evidence type="ECO:0000269" key="3">
    <source>
    </source>
</evidence>
<evidence type="ECO:0000305" key="4"/>
<comment type="function">
    <text>Efficiently decomposes water-insoluble glucan as well as dextran.</text>
</comment>
<comment type="catalytic activity">
    <reaction>
        <text>Endohydrolysis of (1-&gt;6)-alpha-D-glucosidic linkages in dextran.</text>
        <dbReference type="EC" id="3.2.1.11"/>
    </reaction>
</comment>
<comment type="biophysicochemical properties">
    <phDependence>
        <text>Optimum pH is 7.0.</text>
    </phDependence>
    <temperatureDependence>
        <text>Optimum temperature is 42 degrees Celsius.</text>
    </temperatureDependence>
</comment>
<comment type="subcellular location">
    <subcellularLocation>
        <location>Secreted</location>
    </subcellularLocation>
</comment>
<comment type="similarity">
    <text evidence="4">Belongs to the glycosyl hydrolase 49 family.</text>
</comment>
<keyword id="KW-0903">Direct protein sequencing</keyword>
<keyword id="KW-0326">Glycosidase</keyword>
<keyword id="KW-0378">Hydrolase</keyword>
<keyword id="KW-0964">Secreted</keyword>
<keyword id="KW-0732">Signal</keyword>
<organism>
    <name type="scientific">Arthrobacter sp. (strain CB-8)</name>
    <dbReference type="NCBI Taxonomy" id="74565"/>
    <lineage>
        <taxon>Bacteria</taxon>
        <taxon>Bacillati</taxon>
        <taxon>Actinomycetota</taxon>
        <taxon>Actinomycetes</taxon>
        <taxon>Micrococcales</taxon>
        <taxon>Micrococcaceae</taxon>
        <taxon>Arthrobacter</taxon>
    </lineage>
</organism>
<accession>P39652</accession>
<protein>
    <recommendedName>
        <fullName>Dextranase</fullName>
        <ecNumber>3.2.1.11</ecNumber>
    </recommendedName>
    <alternativeName>
        <fullName>Alpha-1,6-glucan-6-glucanohydrolase</fullName>
    </alternativeName>
    <alternativeName>
        <fullName>Endodextranase</fullName>
    </alternativeName>
</protein>
<reference key="1">
    <citation type="journal article" date="1991" name="Jpn. J. Genet.">
        <title>Molecular cloning and nucleotide sequencing of the Arthrobacter dextranase gene and its expression in Escherichia coli and Streptococcus sanguis.</title>
        <authorList>
            <person name="Okushima M."/>
            <person name="Sugino D."/>
            <person name="Kouno Y."/>
            <person name="Nakano S."/>
            <person name="Miyahara J."/>
            <person name="Toda H."/>
            <person name="Kubo S."/>
            <person name="Matsushiro A."/>
        </authorList>
    </citation>
    <scope>NUCLEOTIDE SEQUENCE [GENOMIC DNA]</scope>
    <scope>PROTEIN SEQUENCE OF 50-61</scope>
</reference>